<sequence length="257" mass="28162">MEILQFIGYGNMAQAILEGAHEILSKRFILEITGRNPEKIAPFLQEKNIQAQIVPYKDAIDIHQKFVFLLFKPYNLKDFNYQGQAKSVLSALAGVGFKALSDAIDSLHYLKCMPNIASKFALSSTAVCEKSPMPLISQKALSVIESFGNCVRVGHEELVDASVATNGSALAFLSLVANSLKDAGIREGLNARGSLELVKMSFKGFAKLLEKERPEMIIEQICTPKGATIEGLSVLEKKGVRGAFIEACHKSVKKMRL</sequence>
<proteinExistence type="inferred from homology"/>
<protein>
    <recommendedName>
        <fullName evidence="1">Pyrroline-5-carboxylate reductase</fullName>
        <shortName evidence="1">P5C reductase</shortName>
        <shortName evidence="1">P5CR</shortName>
        <ecNumber evidence="1">1.5.1.2</ecNumber>
    </recommendedName>
    <alternativeName>
        <fullName evidence="1">PCA reductase</fullName>
    </alternativeName>
</protein>
<dbReference type="EC" id="1.5.1.2" evidence="1"/>
<dbReference type="EMBL" id="AE000511">
    <property type="protein sequence ID" value="AAD08197.1"/>
    <property type="molecule type" value="Genomic_DNA"/>
</dbReference>
<dbReference type="PIR" id="F64664">
    <property type="entry name" value="F64664"/>
</dbReference>
<dbReference type="RefSeq" id="NP_207949.1">
    <property type="nucleotide sequence ID" value="NC_000915.1"/>
</dbReference>
<dbReference type="RefSeq" id="WP_000404448.1">
    <property type="nucleotide sequence ID" value="NC_018939.1"/>
</dbReference>
<dbReference type="SMR" id="O25773"/>
<dbReference type="DIP" id="DIP-3659N"/>
<dbReference type="FunCoup" id="O25773">
    <property type="interactions" value="319"/>
</dbReference>
<dbReference type="IntAct" id="O25773">
    <property type="interactions" value="4"/>
</dbReference>
<dbReference type="MINT" id="O25773"/>
<dbReference type="STRING" id="85962.HP_1158"/>
<dbReference type="PaxDb" id="85962-C694_05980"/>
<dbReference type="EnsemblBacteria" id="AAD08197">
    <property type="protein sequence ID" value="AAD08197"/>
    <property type="gene ID" value="HP_1158"/>
</dbReference>
<dbReference type="KEGG" id="heo:C694_05980"/>
<dbReference type="KEGG" id="hpy:HP_1158"/>
<dbReference type="PATRIC" id="fig|85962.47.peg.1242"/>
<dbReference type="eggNOG" id="COG0345">
    <property type="taxonomic scope" value="Bacteria"/>
</dbReference>
<dbReference type="InParanoid" id="O25773"/>
<dbReference type="OrthoDB" id="9805754at2"/>
<dbReference type="PhylomeDB" id="O25773"/>
<dbReference type="UniPathway" id="UPA00098">
    <property type="reaction ID" value="UER00361"/>
</dbReference>
<dbReference type="Proteomes" id="UP000000429">
    <property type="component" value="Chromosome"/>
</dbReference>
<dbReference type="GO" id="GO:0005737">
    <property type="term" value="C:cytoplasm"/>
    <property type="evidence" value="ECO:0007669"/>
    <property type="project" value="UniProtKB-SubCell"/>
</dbReference>
<dbReference type="GO" id="GO:0004735">
    <property type="term" value="F:pyrroline-5-carboxylate reductase activity"/>
    <property type="evidence" value="ECO:0000318"/>
    <property type="project" value="GO_Central"/>
</dbReference>
<dbReference type="GO" id="GO:0055129">
    <property type="term" value="P:L-proline biosynthetic process"/>
    <property type="evidence" value="ECO:0000318"/>
    <property type="project" value="GO_Central"/>
</dbReference>
<dbReference type="FunFam" id="3.40.50.720:FF:000972">
    <property type="entry name" value="Pyrroline-5-carboxylate reductase"/>
    <property type="match status" value="1"/>
</dbReference>
<dbReference type="Gene3D" id="3.40.50.720">
    <property type="entry name" value="NAD(P)-binding Rossmann-like Domain"/>
    <property type="match status" value="1"/>
</dbReference>
<dbReference type="Gene3D" id="1.10.3730.10">
    <property type="entry name" value="ProC C-terminal domain-like"/>
    <property type="match status" value="1"/>
</dbReference>
<dbReference type="HAMAP" id="MF_01925">
    <property type="entry name" value="P5C_reductase"/>
    <property type="match status" value="1"/>
</dbReference>
<dbReference type="InterPro" id="IPR008927">
    <property type="entry name" value="6-PGluconate_DH-like_C_sf"/>
</dbReference>
<dbReference type="InterPro" id="IPR036291">
    <property type="entry name" value="NAD(P)-bd_dom_sf"/>
</dbReference>
<dbReference type="InterPro" id="IPR028939">
    <property type="entry name" value="P5C_Rdtase_cat_N"/>
</dbReference>
<dbReference type="InterPro" id="IPR053790">
    <property type="entry name" value="P5CR-like_CS"/>
</dbReference>
<dbReference type="InterPro" id="IPR029036">
    <property type="entry name" value="P5CR_dimer"/>
</dbReference>
<dbReference type="InterPro" id="IPR000304">
    <property type="entry name" value="Pyrroline-COOH_reductase"/>
</dbReference>
<dbReference type="NCBIfam" id="TIGR00112">
    <property type="entry name" value="proC"/>
    <property type="match status" value="1"/>
</dbReference>
<dbReference type="PANTHER" id="PTHR11645">
    <property type="entry name" value="PYRROLINE-5-CARBOXYLATE REDUCTASE"/>
    <property type="match status" value="1"/>
</dbReference>
<dbReference type="PANTHER" id="PTHR11645:SF0">
    <property type="entry name" value="PYRROLINE-5-CARBOXYLATE REDUCTASE 3"/>
    <property type="match status" value="1"/>
</dbReference>
<dbReference type="Pfam" id="PF03807">
    <property type="entry name" value="F420_oxidored"/>
    <property type="match status" value="1"/>
</dbReference>
<dbReference type="Pfam" id="PF14748">
    <property type="entry name" value="P5CR_dimer"/>
    <property type="match status" value="1"/>
</dbReference>
<dbReference type="PIRSF" id="PIRSF000193">
    <property type="entry name" value="Pyrrol-5-carb_rd"/>
    <property type="match status" value="1"/>
</dbReference>
<dbReference type="SUPFAM" id="SSF48179">
    <property type="entry name" value="6-phosphogluconate dehydrogenase C-terminal domain-like"/>
    <property type="match status" value="1"/>
</dbReference>
<dbReference type="SUPFAM" id="SSF51735">
    <property type="entry name" value="NAD(P)-binding Rossmann-fold domains"/>
    <property type="match status" value="1"/>
</dbReference>
<dbReference type="PROSITE" id="PS00521">
    <property type="entry name" value="P5CR"/>
    <property type="match status" value="1"/>
</dbReference>
<feature type="chain" id="PRO_0000187291" description="Pyrroline-5-carboxylate reductase">
    <location>
        <begin position="1"/>
        <end position="257"/>
    </location>
</feature>
<reference key="1">
    <citation type="journal article" date="1997" name="Nature">
        <title>The complete genome sequence of the gastric pathogen Helicobacter pylori.</title>
        <authorList>
            <person name="Tomb J.-F."/>
            <person name="White O."/>
            <person name="Kerlavage A.R."/>
            <person name="Clayton R.A."/>
            <person name="Sutton G.G."/>
            <person name="Fleischmann R.D."/>
            <person name="Ketchum K.A."/>
            <person name="Klenk H.-P."/>
            <person name="Gill S.R."/>
            <person name="Dougherty B.A."/>
            <person name="Nelson K.E."/>
            <person name="Quackenbush J."/>
            <person name="Zhou L."/>
            <person name="Kirkness E.F."/>
            <person name="Peterson S.N."/>
            <person name="Loftus B.J."/>
            <person name="Richardson D.L."/>
            <person name="Dodson R.J."/>
            <person name="Khalak H.G."/>
            <person name="Glodek A."/>
            <person name="McKenney K."/>
            <person name="FitzGerald L.M."/>
            <person name="Lee N."/>
            <person name="Adams M.D."/>
            <person name="Hickey E.K."/>
            <person name="Berg D.E."/>
            <person name="Gocayne J.D."/>
            <person name="Utterback T.R."/>
            <person name="Peterson J.D."/>
            <person name="Kelley J.M."/>
            <person name="Cotton M.D."/>
            <person name="Weidman J.F."/>
            <person name="Fujii C."/>
            <person name="Bowman C."/>
            <person name="Watthey L."/>
            <person name="Wallin E."/>
            <person name="Hayes W.S."/>
            <person name="Borodovsky M."/>
            <person name="Karp P.D."/>
            <person name="Smith H.O."/>
            <person name="Fraser C.M."/>
            <person name="Venter J.C."/>
        </authorList>
    </citation>
    <scope>NUCLEOTIDE SEQUENCE [LARGE SCALE GENOMIC DNA]</scope>
    <source>
        <strain>ATCC 700392 / 26695</strain>
    </source>
</reference>
<accession>O25773</accession>
<gene>
    <name evidence="1" type="primary">proC</name>
    <name type="ordered locus">HP_1158</name>
</gene>
<name>P5CR_HELPY</name>
<comment type="function">
    <text evidence="1">Catalyzes the reduction of 1-pyrroline-5-carboxylate (PCA) to L-proline.</text>
</comment>
<comment type="catalytic activity">
    <reaction evidence="1">
        <text>L-proline + NADP(+) = (S)-1-pyrroline-5-carboxylate + NADPH + 2 H(+)</text>
        <dbReference type="Rhea" id="RHEA:14109"/>
        <dbReference type="ChEBI" id="CHEBI:15378"/>
        <dbReference type="ChEBI" id="CHEBI:17388"/>
        <dbReference type="ChEBI" id="CHEBI:57783"/>
        <dbReference type="ChEBI" id="CHEBI:58349"/>
        <dbReference type="ChEBI" id="CHEBI:60039"/>
        <dbReference type="EC" id="1.5.1.2"/>
    </reaction>
</comment>
<comment type="catalytic activity">
    <reaction evidence="1">
        <text>L-proline + NAD(+) = (S)-1-pyrroline-5-carboxylate + NADH + 2 H(+)</text>
        <dbReference type="Rhea" id="RHEA:14105"/>
        <dbReference type="ChEBI" id="CHEBI:15378"/>
        <dbReference type="ChEBI" id="CHEBI:17388"/>
        <dbReference type="ChEBI" id="CHEBI:57540"/>
        <dbReference type="ChEBI" id="CHEBI:57945"/>
        <dbReference type="ChEBI" id="CHEBI:60039"/>
        <dbReference type="EC" id="1.5.1.2"/>
    </reaction>
</comment>
<comment type="pathway">
    <text evidence="1">Amino-acid biosynthesis; L-proline biosynthesis; L-proline from L-glutamate 5-semialdehyde: step 1/1.</text>
</comment>
<comment type="subcellular location">
    <subcellularLocation>
        <location evidence="1">Cytoplasm</location>
    </subcellularLocation>
</comment>
<comment type="similarity">
    <text evidence="1">Belongs to the pyrroline-5-carboxylate reductase family.</text>
</comment>
<organism>
    <name type="scientific">Helicobacter pylori (strain ATCC 700392 / 26695)</name>
    <name type="common">Campylobacter pylori</name>
    <dbReference type="NCBI Taxonomy" id="85962"/>
    <lineage>
        <taxon>Bacteria</taxon>
        <taxon>Pseudomonadati</taxon>
        <taxon>Campylobacterota</taxon>
        <taxon>Epsilonproteobacteria</taxon>
        <taxon>Campylobacterales</taxon>
        <taxon>Helicobacteraceae</taxon>
        <taxon>Helicobacter</taxon>
    </lineage>
</organism>
<keyword id="KW-0028">Amino-acid biosynthesis</keyword>
<keyword id="KW-0963">Cytoplasm</keyword>
<keyword id="KW-0521">NADP</keyword>
<keyword id="KW-0560">Oxidoreductase</keyword>
<keyword id="KW-0641">Proline biosynthesis</keyword>
<keyword id="KW-1185">Reference proteome</keyword>
<evidence type="ECO:0000255" key="1">
    <source>
        <dbReference type="HAMAP-Rule" id="MF_01925"/>
    </source>
</evidence>